<proteinExistence type="inferred from homology"/>
<sequence>MMEKNKRVLLGMSGGTDSSVAAMLLLEAGYEVTGVTFRFYEFNGSTEYLEDARALAARLGIGHITYDARKVFQEQIIDYFIDEYMSGHTPVPCTLCNNQLKWPLLAKIADEMGIFYLATGHYVRKQWVDGNYYIAPAEDVDKDQSFFLWGLRQEILQRMLLPMGGMTKSEARAYAAGRGFEKVSKKKDSIGVCFCPLDYRSFLKKCLCDESGDKNRNIYRKVERGRFLDESGNFIAWHEGYPFYTIGQRRGLGIQLNRAVFVKEIHPETNEVVLASLKSLEKSEMWLKDWNIVDESRLLGCDDVIVKIRYRKQENHCSVTITPEGLLHIRLHEPLSAIAEGQAAAFYKDGLLLGGGIITMSDQR</sequence>
<keyword id="KW-0067">ATP-binding</keyword>
<keyword id="KW-0963">Cytoplasm</keyword>
<keyword id="KW-1015">Disulfide bond</keyword>
<keyword id="KW-0547">Nucleotide-binding</keyword>
<keyword id="KW-0694">RNA-binding</keyword>
<keyword id="KW-0808">Transferase</keyword>
<keyword id="KW-0819">tRNA processing</keyword>
<keyword id="KW-0820">tRNA-binding</keyword>
<accession>Q64ZW2</accession>
<feature type="chain" id="PRO_0000349521" description="tRNA-specific 2-thiouridylase MnmA 1">
    <location>
        <begin position="1"/>
        <end position="364"/>
    </location>
</feature>
<feature type="region of interest" description="Interaction with tRNA" evidence="1">
    <location>
        <begin position="142"/>
        <end position="144"/>
    </location>
</feature>
<feature type="region of interest" description="Interaction with tRNA" evidence="1">
    <location>
        <begin position="309"/>
        <end position="310"/>
    </location>
</feature>
<feature type="active site" description="Nucleophile" evidence="1">
    <location>
        <position position="96"/>
    </location>
</feature>
<feature type="active site" description="Cysteine persulfide intermediate" evidence="1">
    <location>
        <position position="193"/>
    </location>
</feature>
<feature type="binding site" evidence="1">
    <location>
        <begin position="11"/>
        <end position="18"/>
    </location>
    <ligand>
        <name>ATP</name>
        <dbReference type="ChEBI" id="CHEBI:30616"/>
    </ligand>
</feature>
<feature type="binding site" evidence="1">
    <location>
        <position position="37"/>
    </location>
    <ligand>
        <name>ATP</name>
        <dbReference type="ChEBI" id="CHEBI:30616"/>
    </ligand>
</feature>
<feature type="binding site" evidence="1">
    <location>
        <position position="120"/>
    </location>
    <ligand>
        <name>ATP</name>
        <dbReference type="ChEBI" id="CHEBI:30616"/>
    </ligand>
</feature>
<feature type="site" description="Interaction with tRNA" evidence="1">
    <location>
        <position position="121"/>
    </location>
</feature>
<feature type="site" description="Interaction with tRNA" evidence="1">
    <location>
        <position position="342"/>
    </location>
</feature>
<feature type="disulfide bond" description="Alternate" evidence="1">
    <location>
        <begin position="96"/>
        <end position="193"/>
    </location>
</feature>
<organism>
    <name type="scientific">Bacteroides fragilis (strain YCH46)</name>
    <dbReference type="NCBI Taxonomy" id="295405"/>
    <lineage>
        <taxon>Bacteria</taxon>
        <taxon>Pseudomonadati</taxon>
        <taxon>Bacteroidota</taxon>
        <taxon>Bacteroidia</taxon>
        <taxon>Bacteroidales</taxon>
        <taxon>Bacteroidaceae</taxon>
        <taxon>Bacteroides</taxon>
    </lineage>
</organism>
<reference key="1">
    <citation type="journal article" date="2004" name="Proc. Natl. Acad. Sci. U.S.A.">
        <title>Genomic analysis of Bacteroides fragilis reveals extensive DNA inversions regulating cell surface adaptation.</title>
        <authorList>
            <person name="Kuwahara T."/>
            <person name="Yamashita A."/>
            <person name="Hirakawa H."/>
            <person name="Nakayama H."/>
            <person name="Toh H."/>
            <person name="Okada N."/>
            <person name="Kuhara S."/>
            <person name="Hattori M."/>
            <person name="Hayashi T."/>
            <person name="Ohnishi Y."/>
        </authorList>
    </citation>
    <scope>NUCLEOTIDE SEQUENCE [LARGE SCALE GENOMIC DNA]</scope>
    <source>
        <strain>YCH46</strain>
    </source>
</reference>
<dbReference type="EC" id="2.8.1.13" evidence="1"/>
<dbReference type="EMBL" id="AP006841">
    <property type="protein sequence ID" value="BAD46964.1"/>
    <property type="molecule type" value="Genomic_DNA"/>
</dbReference>
<dbReference type="RefSeq" id="YP_097498.1">
    <property type="nucleotide sequence ID" value="NC_006347.1"/>
</dbReference>
<dbReference type="SMR" id="Q64ZW2"/>
<dbReference type="STRING" id="295405.BF0215"/>
<dbReference type="KEGG" id="bfr:BF0215"/>
<dbReference type="PATRIC" id="fig|295405.11.peg.245"/>
<dbReference type="HOGENOM" id="CLU_035188_0_0_10"/>
<dbReference type="OrthoDB" id="9800696at2"/>
<dbReference type="Proteomes" id="UP000002197">
    <property type="component" value="Chromosome"/>
</dbReference>
<dbReference type="GO" id="GO:0005737">
    <property type="term" value="C:cytoplasm"/>
    <property type="evidence" value="ECO:0007669"/>
    <property type="project" value="UniProtKB-SubCell"/>
</dbReference>
<dbReference type="GO" id="GO:0005524">
    <property type="term" value="F:ATP binding"/>
    <property type="evidence" value="ECO:0007669"/>
    <property type="project" value="UniProtKB-KW"/>
</dbReference>
<dbReference type="GO" id="GO:0000049">
    <property type="term" value="F:tRNA binding"/>
    <property type="evidence" value="ECO:0007669"/>
    <property type="project" value="UniProtKB-KW"/>
</dbReference>
<dbReference type="GO" id="GO:0103016">
    <property type="term" value="F:tRNA-uridine 2-sulfurtransferase activity"/>
    <property type="evidence" value="ECO:0007669"/>
    <property type="project" value="UniProtKB-EC"/>
</dbReference>
<dbReference type="GO" id="GO:0002143">
    <property type="term" value="P:tRNA wobble position uridine thiolation"/>
    <property type="evidence" value="ECO:0007669"/>
    <property type="project" value="TreeGrafter"/>
</dbReference>
<dbReference type="CDD" id="cd01998">
    <property type="entry name" value="MnmA_TRMU-like"/>
    <property type="match status" value="1"/>
</dbReference>
<dbReference type="Gene3D" id="2.30.30.280">
    <property type="entry name" value="Adenine nucleotide alpha hydrolases-like domains"/>
    <property type="match status" value="1"/>
</dbReference>
<dbReference type="Gene3D" id="3.40.50.620">
    <property type="entry name" value="HUPs"/>
    <property type="match status" value="1"/>
</dbReference>
<dbReference type="Gene3D" id="2.40.30.10">
    <property type="entry name" value="Translation factors"/>
    <property type="match status" value="1"/>
</dbReference>
<dbReference type="HAMAP" id="MF_00144">
    <property type="entry name" value="tRNA_thiouridyl_MnmA"/>
    <property type="match status" value="1"/>
</dbReference>
<dbReference type="InterPro" id="IPR004506">
    <property type="entry name" value="MnmA-like"/>
</dbReference>
<dbReference type="InterPro" id="IPR046885">
    <property type="entry name" value="MnmA-like_C"/>
</dbReference>
<dbReference type="InterPro" id="IPR046884">
    <property type="entry name" value="MnmA-like_central"/>
</dbReference>
<dbReference type="InterPro" id="IPR023382">
    <property type="entry name" value="MnmA-like_central_sf"/>
</dbReference>
<dbReference type="InterPro" id="IPR001763">
    <property type="entry name" value="Rhodanese-like_dom"/>
</dbReference>
<dbReference type="InterPro" id="IPR014729">
    <property type="entry name" value="Rossmann-like_a/b/a_fold"/>
</dbReference>
<dbReference type="NCBIfam" id="NF001138">
    <property type="entry name" value="PRK00143.1"/>
    <property type="match status" value="1"/>
</dbReference>
<dbReference type="NCBIfam" id="NF011259">
    <property type="entry name" value="PRK14665.1"/>
    <property type="match status" value="1"/>
</dbReference>
<dbReference type="NCBIfam" id="TIGR00420">
    <property type="entry name" value="trmU"/>
    <property type="match status" value="1"/>
</dbReference>
<dbReference type="PANTHER" id="PTHR11933:SF5">
    <property type="entry name" value="MITOCHONDRIAL TRNA-SPECIFIC 2-THIOURIDYLASE 1"/>
    <property type="match status" value="1"/>
</dbReference>
<dbReference type="PANTHER" id="PTHR11933">
    <property type="entry name" value="TRNA 5-METHYLAMINOMETHYL-2-THIOURIDYLATE -METHYLTRANSFERASE"/>
    <property type="match status" value="1"/>
</dbReference>
<dbReference type="Pfam" id="PF03054">
    <property type="entry name" value="tRNA_Me_trans"/>
    <property type="match status" value="1"/>
</dbReference>
<dbReference type="Pfam" id="PF20258">
    <property type="entry name" value="tRNA_Me_trans_C"/>
    <property type="match status" value="1"/>
</dbReference>
<dbReference type="Pfam" id="PF20259">
    <property type="entry name" value="tRNA_Me_trans_M"/>
    <property type="match status" value="1"/>
</dbReference>
<dbReference type="SUPFAM" id="SSF52402">
    <property type="entry name" value="Adenine nucleotide alpha hydrolases-like"/>
    <property type="match status" value="1"/>
</dbReference>
<name>MNMA1_BACFR</name>
<protein>
    <recommendedName>
        <fullName evidence="1">tRNA-specific 2-thiouridylase MnmA 1</fullName>
        <ecNumber evidence="1">2.8.1.13</ecNumber>
    </recommendedName>
</protein>
<evidence type="ECO:0000255" key="1">
    <source>
        <dbReference type="HAMAP-Rule" id="MF_00144"/>
    </source>
</evidence>
<comment type="function">
    <text evidence="1">Catalyzes the 2-thiolation of uridine at the wobble position (U34) of tRNA, leading to the formation of s(2)U34.</text>
</comment>
<comment type="catalytic activity">
    <reaction evidence="1">
        <text>S-sulfanyl-L-cysteinyl-[protein] + uridine(34) in tRNA + AH2 + ATP = 2-thiouridine(34) in tRNA + L-cysteinyl-[protein] + A + AMP + diphosphate + H(+)</text>
        <dbReference type="Rhea" id="RHEA:47032"/>
        <dbReference type="Rhea" id="RHEA-COMP:10131"/>
        <dbReference type="Rhea" id="RHEA-COMP:11726"/>
        <dbReference type="Rhea" id="RHEA-COMP:11727"/>
        <dbReference type="Rhea" id="RHEA-COMP:11728"/>
        <dbReference type="ChEBI" id="CHEBI:13193"/>
        <dbReference type="ChEBI" id="CHEBI:15378"/>
        <dbReference type="ChEBI" id="CHEBI:17499"/>
        <dbReference type="ChEBI" id="CHEBI:29950"/>
        <dbReference type="ChEBI" id="CHEBI:30616"/>
        <dbReference type="ChEBI" id="CHEBI:33019"/>
        <dbReference type="ChEBI" id="CHEBI:61963"/>
        <dbReference type="ChEBI" id="CHEBI:65315"/>
        <dbReference type="ChEBI" id="CHEBI:87170"/>
        <dbReference type="ChEBI" id="CHEBI:456215"/>
        <dbReference type="EC" id="2.8.1.13"/>
    </reaction>
</comment>
<comment type="subcellular location">
    <subcellularLocation>
        <location evidence="1">Cytoplasm</location>
    </subcellularLocation>
</comment>
<comment type="similarity">
    <text evidence="1">Belongs to the MnmA/TRMU family.</text>
</comment>
<gene>
    <name evidence="1" type="primary">mnmA1</name>
    <name type="ordered locus">BF0215</name>
</gene>